<sequence length="142" mass="15241">MVLSPADKSNVKATWDKIGSHAGEYGGEALERTFASFPTTKTYFPHFDLSPGSAQVKAHGKKVADALTTAAGHLDDLPGALSALSDLHAHKLRVDPVNFKFLSHCLLVTLASHHPAEFTPAVHASLDKFFSAVSTVLTSKYR</sequence>
<comment type="function">
    <text>Involved in oxygen transport from the lung to the various peripheral tissues.</text>
</comment>
<comment type="function">
    <molecule>Hemopressin</molecule>
    <text evidence="2">Hemopressin acts as an antagonist peptide of the cannabinoid receptor CNR1. Hemopressin-binding efficiently blocks cannabinoid receptor CNR1 and subsequent signaling.</text>
</comment>
<comment type="subunit">
    <text>Heterotetramer of two alpha chains and two beta chains.</text>
</comment>
<comment type="tissue specificity">
    <text>Red blood cells.</text>
</comment>
<comment type="similarity">
    <text evidence="5">Belongs to the globin family.</text>
</comment>
<dbReference type="PIR" id="B90709">
    <property type="entry name" value="HABRT"/>
</dbReference>
<dbReference type="SMR" id="P68236"/>
<dbReference type="GO" id="GO:0072562">
    <property type="term" value="C:blood microparticle"/>
    <property type="evidence" value="ECO:0007669"/>
    <property type="project" value="TreeGrafter"/>
</dbReference>
<dbReference type="GO" id="GO:0031838">
    <property type="term" value="C:haptoglobin-hemoglobin complex"/>
    <property type="evidence" value="ECO:0007669"/>
    <property type="project" value="TreeGrafter"/>
</dbReference>
<dbReference type="GO" id="GO:0005833">
    <property type="term" value="C:hemoglobin complex"/>
    <property type="evidence" value="ECO:0007669"/>
    <property type="project" value="InterPro"/>
</dbReference>
<dbReference type="GO" id="GO:0031720">
    <property type="term" value="F:haptoglobin binding"/>
    <property type="evidence" value="ECO:0007669"/>
    <property type="project" value="TreeGrafter"/>
</dbReference>
<dbReference type="GO" id="GO:0020037">
    <property type="term" value="F:heme binding"/>
    <property type="evidence" value="ECO:0007669"/>
    <property type="project" value="InterPro"/>
</dbReference>
<dbReference type="GO" id="GO:0005506">
    <property type="term" value="F:iron ion binding"/>
    <property type="evidence" value="ECO:0007669"/>
    <property type="project" value="InterPro"/>
</dbReference>
<dbReference type="GO" id="GO:0043177">
    <property type="term" value="F:organic acid binding"/>
    <property type="evidence" value="ECO:0007669"/>
    <property type="project" value="TreeGrafter"/>
</dbReference>
<dbReference type="GO" id="GO:0019825">
    <property type="term" value="F:oxygen binding"/>
    <property type="evidence" value="ECO:0007669"/>
    <property type="project" value="InterPro"/>
</dbReference>
<dbReference type="GO" id="GO:0005344">
    <property type="term" value="F:oxygen carrier activity"/>
    <property type="evidence" value="ECO:0007669"/>
    <property type="project" value="UniProtKB-KW"/>
</dbReference>
<dbReference type="GO" id="GO:0004601">
    <property type="term" value="F:peroxidase activity"/>
    <property type="evidence" value="ECO:0007669"/>
    <property type="project" value="TreeGrafter"/>
</dbReference>
<dbReference type="GO" id="GO:0042744">
    <property type="term" value="P:hydrogen peroxide catabolic process"/>
    <property type="evidence" value="ECO:0007669"/>
    <property type="project" value="TreeGrafter"/>
</dbReference>
<dbReference type="CDD" id="cd08927">
    <property type="entry name" value="Hb-alpha-like"/>
    <property type="match status" value="1"/>
</dbReference>
<dbReference type="FunFam" id="1.10.490.10:FF:000002">
    <property type="entry name" value="Hemoglobin subunit alpha"/>
    <property type="match status" value="1"/>
</dbReference>
<dbReference type="Gene3D" id="1.10.490.10">
    <property type="entry name" value="Globins"/>
    <property type="match status" value="1"/>
</dbReference>
<dbReference type="InterPro" id="IPR000971">
    <property type="entry name" value="Globin"/>
</dbReference>
<dbReference type="InterPro" id="IPR009050">
    <property type="entry name" value="Globin-like_sf"/>
</dbReference>
<dbReference type="InterPro" id="IPR012292">
    <property type="entry name" value="Globin/Proto"/>
</dbReference>
<dbReference type="InterPro" id="IPR002338">
    <property type="entry name" value="Hemoglobin_a-typ"/>
</dbReference>
<dbReference type="InterPro" id="IPR050056">
    <property type="entry name" value="Hemoglobin_oxygen_transport"/>
</dbReference>
<dbReference type="InterPro" id="IPR002339">
    <property type="entry name" value="Hemoglobin_pi"/>
</dbReference>
<dbReference type="PANTHER" id="PTHR11442">
    <property type="entry name" value="HEMOGLOBIN FAMILY MEMBER"/>
    <property type="match status" value="1"/>
</dbReference>
<dbReference type="PANTHER" id="PTHR11442:SF48">
    <property type="entry name" value="HEMOGLOBIN SUBUNIT ALPHA"/>
    <property type="match status" value="1"/>
</dbReference>
<dbReference type="Pfam" id="PF00042">
    <property type="entry name" value="Globin"/>
    <property type="match status" value="1"/>
</dbReference>
<dbReference type="PRINTS" id="PR00612">
    <property type="entry name" value="ALPHAHAEM"/>
</dbReference>
<dbReference type="PRINTS" id="PR00815">
    <property type="entry name" value="PIHAEM"/>
</dbReference>
<dbReference type="SUPFAM" id="SSF46458">
    <property type="entry name" value="Globin-like"/>
    <property type="match status" value="1"/>
</dbReference>
<dbReference type="PROSITE" id="PS01033">
    <property type="entry name" value="GLOBIN"/>
    <property type="match status" value="1"/>
</dbReference>
<gene>
    <name type="primary">HBA</name>
</gene>
<feature type="initiator methionine" description="Removed" evidence="3">
    <location>
        <position position="1"/>
    </location>
</feature>
<feature type="chain" id="PRO_0000052800" description="Hemoglobin subunit alpha">
    <location>
        <begin position="2"/>
        <end position="142"/>
    </location>
</feature>
<feature type="peptide" id="PRO_0000455959" description="Hemopressin" evidence="2">
    <location>
        <begin position="96"/>
        <end position="104"/>
    </location>
</feature>
<feature type="domain" description="Globin" evidence="5">
    <location>
        <begin position="2"/>
        <end position="142"/>
    </location>
</feature>
<feature type="binding site" evidence="5">
    <location>
        <position position="59"/>
    </location>
    <ligand>
        <name>O2</name>
        <dbReference type="ChEBI" id="CHEBI:15379"/>
    </ligand>
</feature>
<feature type="binding site" description="proximal binding residue" evidence="5">
    <location>
        <position position="88"/>
    </location>
    <ligand>
        <name>heme b</name>
        <dbReference type="ChEBI" id="CHEBI:60344"/>
    </ligand>
    <ligandPart>
        <name>Fe</name>
        <dbReference type="ChEBI" id="CHEBI:18248"/>
    </ligandPart>
</feature>
<feature type="modified residue" description="Phosphoserine" evidence="4">
    <location>
        <position position="4"/>
    </location>
</feature>
<feature type="modified residue" description="N6-succinyllysine" evidence="1">
    <location>
        <position position="8"/>
    </location>
</feature>
<feature type="modified residue" description="N6-succinyllysine" evidence="1">
    <location>
        <position position="12"/>
    </location>
</feature>
<feature type="modified residue" description="N6-acetyllysine; alternate" evidence="4">
    <location>
        <position position="17"/>
    </location>
</feature>
<feature type="modified residue" description="N6-succinyllysine; alternate" evidence="1">
    <location>
        <position position="17"/>
    </location>
</feature>
<feature type="modified residue" description="Phosphotyrosine" evidence="4">
    <location>
        <position position="25"/>
    </location>
</feature>
<feature type="modified residue" description="Phosphoserine" evidence="4">
    <location>
        <position position="36"/>
    </location>
</feature>
<feature type="modified residue" description="N6-succinyllysine" evidence="1">
    <location>
        <position position="41"/>
    </location>
</feature>
<feature type="modified residue" description="Phosphoserine" evidence="4">
    <location>
        <position position="50"/>
    </location>
</feature>
<feature type="modified residue" description="Phosphoserine" evidence="1">
    <location>
        <position position="103"/>
    </location>
</feature>
<feature type="modified residue" description="Phosphothreonine" evidence="1">
    <location>
        <position position="109"/>
    </location>
</feature>
<feature type="modified residue" description="Phosphoserine" evidence="1">
    <location>
        <position position="125"/>
    </location>
</feature>
<feature type="modified residue" description="Phosphothreonine" evidence="1">
    <location>
        <position position="135"/>
    </location>
</feature>
<feature type="modified residue" description="Phosphothreonine" evidence="1">
    <location>
        <position position="138"/>
    </location>
</feature>
<feature type="modified residue" description="Phosphoserine" evidence="1">
    <location>
        <position position="139"/>
    </location>
</feature>
<accession>P68236</accession>
<accession>P07423</accession>
<protein>
    <recommendedName>
        <fullName>Hemoglobin subunit alpha</fullName>
    </recommendedName>
    <alternativeName>
        <fullName>Alpha-globin</fullName>
    </alternativeName>
    <alternativeName>
        <fullName>Hemoglobin alpha chain</fullName>
    </alternativeName>
    <component>
        <recommendedName>
            <fullName evidence="2">Hemopressin</fullName>
        </recommendedName>
    </component>
</protein>
<name>HBA_URSTH</name>
<keyword id="KW-0007">Acetylation</keyword>
<keyword id="KW-0903">Direct protein sequencing</keyword>
<keyword id="KW-0349">Heme</keyword>
<keyword id="KW-0408">Iron</keyword>
<keyword id="KW-0479">Metal-binding</keyword>
<keyword id="KW-0561">Oxygen transport</keyword>
<keyword id="KW-0597">Phosphoprotein</keyword>
<keyword id="KW-0813">Transport</keyword>
<organism>
    <name type="scientific">Ursus thibetanus</name>
    <name type="common">Asiatic black bear</name>
    <name type="synonym">Selenarctos thibetanus</name>
    <dbReference type="NCBI Taxonomy" id="9642"/>
    <lineage>
        <taxon>Eukaryota</taxon>
        <taxon>Metazoa</taxon>
        <taxon>Chordata</taxon>
        <taxon>Craniata</taxon>
        <taxon>Vertebrata</taxon>
        <taxon>Euteleostomi</taxon>
        <taxon>Mammalia</taxon>
        <taxon>Eutheria</taxon>
        <taxon>Laurasiatheria</taxon>
        <taxon>Carnivora</taxon>
        <taxon>Caniformia</taxon>
        <taxon>Ursidae</taxon>
        <taxon>Ursus</taxon>
    </lineage>
</organism>
<evidence type="ECO:0000250" key="1">
    <source>
        <dbReference type="UniProtKB" id="P01942"/>
    </source>
</evidence>
<evidence type="ECO:0000250" key="2">
    <source>
        <dbReference type="UniProtKB" id="P01946"/>
    </source>
</evidence>
<evidence type="ECO:0000250" key="3">
    <source>
        <dbReference type="UniProtKB" id="P18969"/>
    </source>
</evidence>
<evidence type="ECO:0000250" key="4">
    <source>
        <dbReference type="UniProtKB" id="P69905"/>
    </source>
</evidence>
<evidence type="ECO:0000255" key="5">
    <source>
        <dbReference type="PROSITE-ProRule" id="PRU00238"/>
    </source>
</evidence>
<proteinExistence type="evidence at protein level"/>
<reference key="1">
    <citation type="journal article" date="1986" name="Biol. Chem. Hoppe-Seyler">
        <title>Primary structure of hemoglobin of the polar bear (Ursus maritimus, Carnivora) and the Asiatic black bear (Ursus tibetanus, Carnivora).</title>
        <authorList>
            <person name="Hofmann O."/>
            <person name="Schreitmuller T."/>
            <person name="Braunitzer G."/>
            <person name="Wiesner M.V.H."/>
        </authorList>
    </citation>
    <scope>PROTEIN SEQUENCE OF 2-142</scope>
</reference>